<gene>
    <name evidence="6" type="primary">NAC23</name>
    <name evidence="7" type="synonym">NAC6</name>
    <name evidence="5" type="synonym">TMS5</name>
    <name evidence="8" type="ORF">OsI_06364</name>
</gene>
<reference key="1">
    <citation type="journal article" date="2016" name="Front. Plant Sci.">
        <title>Three rice NAC transcription factors heteromerize and are associated with seed size.</title>
        <authorList>
            <person name="Mathew I.E."/>
            <person name="Das S."/>
            <person name="Mahto A."/>
            <person name="Agarwal P."/>
        </authorList>
    </citation>
    <scope>NUCLEOTIDE SEQUENCE [MRNA]</scope>
    <scope>FUNCTION</scope>
    <scope>INTERACTION WITH NAC26</scope>
    <scope>SUBCELLULAR LOCATION</scope>
    <scope>TISSUE SPECIFICITY</scope>
</reference>
<reference key="2">
    <citation type="journal article" date="2005" name="PLoS Biol.">
        <title>The genomes of Oryza sativa: a history of duplications.</title>
        <authorList>
            <person name="Yu J."/>
            <person name="Wang J."/>
            <person name="Lin W."/>
            <person name="Li S."/>
            <person name="Li H."/>
            <person name="Zhou J."/>
            <person name="Ni P."/>
            <person name="Dong W."/>
            <person name="Hu S."/>
            <person name="Zeng C."/>
            <person name="Zhang J."/>
            <person name="Zhang Y."/>
            <person name="Li R."/>
            <person name="Xu Z."/>
            <person name="Li S."/>
            <person name="Li X."/>
            <person name="Zheng H."/>
            <person name="Cong L."/>
            <person name="Lin L."/>
            <person name="Yin J."/>
            <person name="Geng J."/>
            <person name="Li G."/>
            <person name="Shi J."/>
            <person name="Liu J."/>
            <person name="Lv H."/>
            <person name="Li J."/>
            <person name="Wang J."/>
            <person name="Deng Y."/>
            <person name="Ran L."/>
            <person name="Shi X."/>
            <person name="Wang X."/>
            <person name="Wu Q."/>
            <person name="Li C."/>
            <person name="Ren X."/>
            <person name="Wang J."/>
            <person name="Wang X."/>
            <person name="Li D."/>
            <person name="Liu D."/>
            <person name="Zhang X."/>
            <person name="Ji Z."/>
            <person name="Zhao W."/>
            <person name="Sun Y."/>
            <person name="Zhang Z."/>
            <person name="Bao J."/>
            <person name="Han Y."/>
            <person name="Dong L."/>
            <person name="Ji J."/>
            <person name="Chen P."/>
            <person name="Wu S."/>
            <person name="Liu J."/>
            <person name="Xiao Y."/>
            <person name="Bu D."/>
            <person name="Tan J."/>
            <person name="Yang L."/>
            <person name="Ye C."/>
            <person name="Zhang J."/>
            <person name="Xu J."/>
            <person name="Zhou Y."/>
            <person name="Yu Y."/>
            <person name="Zhang B."/>
            <person name="Zhuang S."/>
            <person name="Wei H."/>
            <person name="Liu B."/>
            <person name="Lei M."/>
            <person name="Yu H."/>
            <person name="Li Y."/>
            <person name="Xu H."/>
            <person name="Wei S."/>
            <person name="He X."/>
            <person name="Fang L."/>
            <person name="Zhang Z."/>
            <person name="Zhang Y."/>
            <person name="Huang X."/>
            <person name="Su Z."/>
            <person name="Tong W."/>
            <person name="Li J."/>
            <person name="Tong Z."/>
            <person name="Li S."/>
            <person name="Ye J."/>
            <person name="Wang L."/>
            <person name="Fang L."/>
            <person name="Lei T."/>
            <person name="Chen C.-S."/>
            <person name="Chen H.-C."/>
            <person name="Xu Z."/>
            <person name="Li H."/>
            <person name="Huang H."/>
            <person name="Zhang F."/>
            <person name="Xu H."/>
            <person name="Li N."/>
            <person name="Zhao C."/>
            <person name="Li S."/>
            <person name="Dong L."/>
            <person name="Huang Y."/>
            <person name="Li L."/>
            <person name="Xi Y."/>
            <person name="Qi Q."/>
            <person name="Li W."/>
            <person name="Zhang B."/>
            <person name="Hu W."/>
            <person name="Zhang Y."/>
            <person name="Tian X."/>
            <person name="Jiao Y."/>
            <person name="Liang X."/>
            <person name="Jin J."/>
            <person name="Gao L."/>
            <person name="Zheng W."/>
            <person name="Hao B."/>
            <person name="Liu S.-M."/>
            <person name="Wang W."/>
            <person name="Yuan L."/>
            <person name="Cao M."/>
            <person name="McDermott J."/>
            <person name="Samudrala R."/>
            <person name="Wang J."/>
            <person name="Wong G.K.-S."/>
            <person name="Yang H."/>
        </authorList>
    </citation>
    <scope>NUCLEOTIDE SEQUENCE [LARGE SCALE GENOMIC DNA]</scope>
    <source>
        <strain>cv. 93-11</strain>
    </source>
</reference>
<reference key="3">
    <citation type="journal article" date="2007" name="Planta">
        <title>Characterization and identification of the candidate gene of rice thermo-sensitive genic male sterile gene tms5 by mapping.</title>
        <authorList>
            <person name="Yang Q."/>
            <person name="Liang C."/>
            <person name="Zhuang W."/>
            <person name="Li J."/>
            <person name="Deng H."/>
            <person name="Deng Q."/>
            <person name="Wang B."/>
        </authorList>
    </citation>
    <scope>TISSUE SPECIFICITY</scope>
</reference>
<comment type="function">
    <text evidence="4">Transcription factor involved in the regulation of seed size (PubMed:27872632). Possesses transactivation activity in yeast (PubMed:27872632).</text>
</comment>
<comment type="subunit">
    <text evidence="4">Forms heterodimers with NAC26.</text>
</comment>
<comment type="subcellular location">
    <subcellularLocation>
        <location evidence="1">Nucleus</location>
    </subcellularLocation>
    <subcellularLocation>
        <location evidence="4">Cytoplasm</location>
    </subcellularLocation>
</comment>
<comment type="tissue specificity">
    <text evidence="3 4">Expressed in stems and panicles (PubMed:16896793). Expressed in developing seeds (PubMed:27872632).</text>
</comment>
<comment type="domain">
    <text evidence="1">The NAC domain includes a DNA binding domain and a dimerization domain.</text>
</comment>
<protein>
    <recommendedName>
        <fullName evidence="6">NAC domain-containing protein 23</fullName>
        <shortName evidence="6">ONAC023</shortName>
    </recommendedName>
    <alternativeName>
        <fullName evidence="7">OsNAC6</fullName>
    </alternativeName>
    <alternativeName>
        <fullName evidence="5">Protein THERMOSENSITIVE MALE STERILITY 5</fullName>
    </alternativeName>
</protein>
<name>NAC23_ORYSI</name>
<sequence length="252" mass="28192">MAMTPQLAFSRMPPGFRFQPTDEQLVVDYLQRRTAAQPCVTPDITDIDVYNVDPWQLPAMAMYGSDHDRYFFTMAAREAQARRTTPSGFWKPTGTKKTIFVVAGGHEVPTAVKRRFVFYLGHHQPSGSSNNNKTSWIMHEYRLMNSPRAAVPSSSSVNRLPTDDLTEEMVLCRISNKDLPKPPFIHNGLLQFSSVGLNGDGYNYLILDHLEPPAMEYPNVDIGNVDDAAAADDDPGDLDEEIDDSMQRNHGG</sequence>
<accession>B8AE67</accession>
<accession>A0A1L3MZG8</accession>
<feature type="chain" id="PRO_0000452673" description="NAC domain-containing protein 23">
    <location>
        <begin position="1"/>
        <end position="252"/>
    </location>
</feature>
<feature type="domain" description="NAC" evidence="1">
    <location>
        <begin position="12"/>
        <end position="177"/>
    </location>
</feature>
<feature type="DNA-binding region" evidence="1">
    <location>
        <begin position="110"/>
        <end position="183"/>
    </location>
</feature>
<feature type="region of interest" description="Disordered" evidence="2">
    <location>
        <begin position="225"/>
        <end position="252"/>
    </location>
</feature>
<feature type="compositionally biased region" description="Acidic residues" evidence="2">
    <location>
        <begin position="229"/>
        <end position="244"/>
    </location>
</feature>
<feature type="sequence conflict" description="In Ref. 1; APH07727." evidence="7" ref="1">
    <original>S</original>
    <variation>N</variation>
    <location>
        <position position="129"/>
    </location>
</feature>
<dbReference type="EMBL" id="KX953279">
    <property type="protein sequence ID" value="APH07727.1"/>
    <property type="molecule type" value="mRNA"/>
</dbReference>
<dbReference type="EMBL" id="CM000127">
    <property type="protein sequence ID" value="EEC72740.1"/>
    <property type="molecule type" value="Genomic_DNA"/>
</dbReference>
<dbReference type="SMR" id="B8AE67"/>
<dbReference type="STRING" id="39946.B8AE67"/>
<dbReference type="EnsemblPlants" id="BGIOSGA007783-TA">
    <property type="protein sequence ID" value="BGIOSGA007783-PA"/>
    <property type="gene ID" value="BGIOSGA007783"/>
</dbReference>
<dbReference type="Gramene" id="BGIOSGA007783-TA">
    <property type="protein sequence ID" value="BGIOSGA007783-PA"/>
    <property type="gene ID" value="BGIOSGA007783"/>
</dbReference>
<dbReference type="HOGENOM" id="CLU_035664_10_0_1"/>
<dbReference type="OMA" id="MHEYCLT"/>
<dbReference type="Proteomes" id="UP000007015">
    <property type="component" value="Chromosome 2"/>
</dbReference>
<dbReference type="GO" id="GO:0005737">
    <property type="term" value="C:cytoplasm"/>
    <property type="evidence" value="ECO:0000314"/>
    <property type="project" value="UniProtKB"/>
</dbReference>
<dbReference type="GO" id="GO:0005634">
    <property type="term" value="C:nucleus"/>
    <property type="evidence" value="ECO:0007669"/>
    <property type="project" value="UniProtKB-SubCell"/>
</dbReference>
<dbReference type="GO" id="GO:0043565">
    <property type="term" value="F:sequence-specific DNA binding"/>
    <property type="evidence" value="ECO:0007669"/>
    <property type="project" value="EnsemblPlants"/>
</dbReference>
<dbReference type="GO" id="GO:0006355">
    <property type="term" value="P:regulation of DNA-templated transcription"/>
    <property type="evidence" value="ECO:0000314"/>
    <property type="project" value="UniProtKB"/>
</dbReference>
<dbReference type="GO" id="GO:0080050">
    <property type="term" value="P:regulation of seed development"/>
    <property type="evidence" value="ECO:0000315"/>
    <property type="project" value="UniProtKB"/>
</dbReference>
<dbReference type="Gene3D" id="2.170.150.80">
    <property type="entry name" value="NAC domain"/>
    <property type="match status" value="1"/>
</dbReference>
<dbReference type="InterPro" id="IPR003441">
    <property type="entry name" value="NAC-dom"/>
</dbReference>
<dbReference type="InterPro" id="IPR036093">
    <property type="entry name" value="NAC_dom_sf"/>
</dbReference>
<dbReference type="PANTHER" id="PTHR31719">
    <property type="entry name" value="NAC TRANSCRIPTION FACTOR 56"/>
    <property type="match status" value="1"/>
</dbReference>
<dbReference type="PANTHER" id="PTHR31719:SF94">
    <property type="entry name" value="PROTEIN ATAF2"/>
    <property type="match status" value="1"/>
</dbReference>
<dbReference type="Pfam" id="PF02365">
    <property type="entry name" value="NAM"/>
    <property type="match status" value="1"/>
</dbReference>
<dbReference type="SUPFAM" id="SSF101941">
    <property type="entry name" value="NAC domain"/>
    <property type="match status" value="1"/>
</dbReference>
<dbReference type="PROSITE" id="PS51005">
    <property type="entry name" value="NAC"/>
    <property type="match status" value="1"/>
</dbReference>
<evidence type="ECO:0000255" key="1">
    <source>
        <dbReference type="PROSITE-ProRule" id="PRU00353"/>
    </source>
</evidence>
<evidence type="ECO:0000256" key="2">
    <source>
        <dbReference type="SAM" id="MobiDB-lite"/>
    </source>
</evidence>
<evidence type="ECO:0000269" key="3">
    <source>
    </source>
</evidence>
<evidence type="ECO:0000269" key="4">
    <source>
    </source>
</evidence>
<evidence type="ECO:0000303" key="5">
    <source>
    </source>
</evidence>
<evidence type="ECO:0000303" key="6">
    <source>
    </source>
</evidence>
<evidence type="ECO:0000305" key="7"/>
<evidence type="ECO:0000312" key="8">
    <source>
        <dbReference type="EMBL" id="EEC72740.1"/>
    </source>
</evidence>
<keyword id="KW-0963">Cytoplasm</keyword>
<keyword id="KW-0238">DNA-binding</keyword>
<keyword id="KW-0539">Nucleus</keyword>
<keyword id="KW-1185">Reference proteome</keyword>
<keyword id="KW-0804">Transcription</keyword>
<keyword id="KW-0805">Transcription regulation</keyword>
<organism>
    <name type="scientific">Oryza sativa subsp. indica</name>
    <name type="common">Rice</name>
    <dbReference type="NCBI Taxonomy" id="39946"/>
    <lineage>
        <taxon>Eukaryota</taxon>
        <taxon>Viridiplantae</taxon>
        <taxon>Streptophyta</taxon>
        <taxon>Embryophyta</taxon>
        <taxon>Tracheophyta</taxon>
        <taxon>Spermatophyta</taxon>
        <taxon>Magnoliopsida</taxon>
        <taxon>Liliopsida</taxon>
        <taxon>Poales</taxon>
        <taxon>Poaceae</taxon>
        <taxon>BOP clade</taxon>
        <taxon>Oryzoideae</taxon>
        <taxon>Oryzeae</taxon>
        <taxon>Oryzinae</taxon>
        <taxon>Oryza</taxon>
        <taxon>Oryza sativa</taxon>
    </lineage>
</organism>
<proteinExistence type="evidence at protein level"/>